<gene>
    <name type="primary">mta</name>
</gene>
<name>MTA_SALAL</name>
<organism>
    <name type="scientific">Salvelinus alpinus</name>
    <name type="common">Arctic char</name>
    <name type="synonym">Salmo alpinus</name>
    <dbReference type="NCBI Taxonomy" id="8036"/>
    <lineage>
        <taxon>Eukaryota</taxon>
        <taxon>Metazoa</taxon>
        <taxon>Chordata</taxon>
        <taxon>Craniata</taxon>
        <taxon>Vertebrata</taxon>
        <taxon>Euteleostomi</taxon>
        <taxon>Actinopterygii</taxon>
        <taxon>Neopterygii</taxon>
        <taxon>Teleostei</taxon>
        <taxon>Protacanthopterygii</taxon>
        <taxon>Salmoniformes</taxon>
        <taxon>Salmonidae</taxon>
        <taxon>Salmoninae</taxon>
        <taxon>Salvelinus</taxon>
    </lineage>
</organism>
<protein>
    <recommendedName>
        <fullName>Metallothionein A</fullName>
        <shortName>MT-A</shortName>
    </recommendedName>
</protein>
<dbReference type="EMBL" id="AF013800">
    <property type="protein sequence ID" value="AAB66342.1"/>
    <property type="molecule type" value="mRNA"/>
</dbReference>
<dbReference type="EMBL" id="AF098071">
    <property type="protein sequence ID" value="AAC68704.1"/>
    <property type="molecule type" value="mRNA"/>
</dbReference>
<dbReference type="EMBL" id="AY267819">
    <property type="protein sequence ID" value="AAP31403.1"/>
    <property type="molecule type" value="Genomic_DNA"/>
</dbReference>
<dbReference type="GO" id="GO:0046870">
    <property type="term" value="F:cadmium ion binding"/>
    <property type="evidence" value="ECO:0000250"/>
    <property type="project" value="AgBase"/>
</dbReference>
<dbReference type="GO" id="GO:0008270">
    <property type="term" value="F:zinc ion binding"/>
    <property type="evidence" value="ECO:0000250"/>
    <property type="project" value="AgBase"/>
</dbReference>
<dbReference type="GO" id="GO:0051259">
    <property type="term" value="P:protein complex oligomerization"/>
    <property type="evidence" value="ECO:0000250"/>
    <property type="project" value="AgBase"/>
</dbReference>
<dbReference type="GO" id="GO:0046686">
    <property type="term" value="P:response to cadmium ion"/>
    <property type="evidence" value="ECO:0000250"/>
    <property type="project" value="AgBase"/>
</dbReference>
<dbReference type="GO" id="GO:0046688">
    <property type="term" value="P:response to copper ion"/>
    <property type="evidence" value="ECO:0000250"/>
    <property type="project" value="AgBase"/>
</dbReference>
<dbReference type="GO" id="GO:0046689">
    <property type="term" value="P:response to mercury ion"/>
    <property type="evidence" value="ECO:0000250"/>
    <property type="project" value="AgBase"/>
</dbReference>
<dbReference type="GO" id="GO:0010043">
    <property type="term" value="P:response to zinc ion"/>
    <property type="evidence" value="ECO:0000250"/>
    <property type="project" value="AgBase"/>
</dbReference>
<dbReference type="FunFam" id="4.10.10.10:FF:000001">
    <property type="entry name" value="Metallothionein"/>
    <property type="match status" value="1"/>
</dbReference>
<dbReference type="Gene3D" id="4.10.10.10">
    <property type="entry name" value="Metallothionein Isoform II"/>
    <property type="match status" value="1"/>
</dbReference>
<dbReference type="InterPro" id="IPR017854">
    <property type="entry name" value="Metalthion_dom_sf"/>
</dbReference>
<dbReference type="InterPro" id="IPR023587">
    <property type="entry name" value="Metalthion_dom_sf_vert"/>
</dbReference>
<dbReference type="InterPro" id="IPR000006">
    <property type="entry name" value="Metalthion_vert"/>
</dbReference>
<dbReference type="InterPro" id="IPR018064">
    <property type="entry name" value="Metalthion_vert_metal_BS"/>
</dbReference>
<dbReference type="PANTHER" id="PTHR23299">
    <property type="entry name" value="METALLOTHIONEIN"/>
    <property type="match status" value="1"/>
</dbReference>
<dbReference type="PANTHER" id="PTHR23299:SF24">
    <property type="entry name" value="METALLOTHIONEIN-1X"/>
    <property type="match status" value="1"/>
</dbReference>
<dbReference type="Pfam" id="PF00131">
    <property type="entry name" value="Metallothio"/>
    <property type="match status" value="1"/>
</dbReference>
<dbReference type="PRINTS" id="PR00860">
    <property type="entry name" value="MTVERTEBRATE"/>
</dbReference>
<dbReference type="SUPFAM" id="SSF57868">
    <property type="entry name" value="Metallothionein"/>
    <property type="match status" value="1"/>
</dbReference>
<dbReference type="PROSITE" id="PS00203">
    <property type="entry name" value="METALLOTHIONEIN_VRT"/>
    <property type="match status" value="1"/>
</dbReference>
<comment type="function">
    <text evidence="1">Metallothioneins have a high content of cysteine residues that bind various heavy metals.</text>
</comment>
<comment type="domain">
    <text>Class I metallothioneins contain 2 metal-binding domains: four divalent ions are chelated within cluster A of the alpha domain and are coordinated via cysteinyl thiolate bridges to 11 cysteine ligands. Cluster B, the corresponding region within the beta domain, can ligate three divalent ions to 9 cysteines.</text>
</comment>
<comment type="similarity">
    <text evidence="4">Belongs to the metallothionein superfamily. Type 1 family.</text>
</comment>
<feature type="chain" id="PRO_0000197312" description="Metallothionein A">
    <location>
        <begin position="1"/>
        <end position="61"/>
    </location>
</feature>
<feature type="region of interest" description="Beta">
    <location>
        <begin position="1"/>
        <end position="28"/>
    </location>
</feature>
<feature type="region of interest" description="Alpha">
    <location>
        <begin position="29"/>
        <end position="61"/>
    </location>
</feature>
<feature type="binding site" evidence="2">
    <location>
        <position position="4"/>
    </location>
    <ligand>
        <name>a divalent metal cation</name>
        <dbReference type="ChEBI" id="CHEBI:60240"/>
        <label>1</label>
        <note>in cluster B</note>
    </ligand>
</feature>
<feature type="binding site" evidence="2">
    <location>
        <position position="6"/>
    </location>
    <ligand>
        <name>a divalent metal cation</name>
        <dbReference type="ChEBI" id="CHEBI:60240"/>
        <label>1</label>
        <note>in cluster B</note>
    </ligand>
</feature>
<feature type="binding site" evidence="2">
    <location>
        <position position="6"/>
    </location>
    <ligand>
        <name>a divalent metal cation</name>
        <dbReference type="ChEBI" id="CHEBI:60240"/>
        <label>2</label>
        <note>in cluster B</note>
    </ligand>
</feature>
<feature type="binding site" evidence="2">
    <location>
        <position position="12"/>
    </location>
    <ligand>
        <name>a divalent metal cation</name>
        <dbReference type="ChEBI" id="CHEBI:60240"/>
        <label>2</label>
        <note>in cluster B</note>
    </ligand>
</feature>
<feature type="binding site" evidence="2">
    <location>
        <position position="14"/>
    </location>
    <ligand>
        <name>a divalent metal cation</name>
        <dbReference type="ChEBI" id="CHEBI:60240"/>
        <label>2</label>
        <note>in cluster B</note>
    </ligand>
</feature>
<feature type="binding site" evidence="2">
    <location>
        <position position="14"/>
    </location>
    <ligand>
        <name>a divalent metal cation</name>
        <dbReference type="ChEBI" id="CHEBI:60240"/>
        <label>3</label>
        <note>in cluster B</note>
    </ligand>
</feature>
<feature type="binding site" evidence="2">
    <location>
        <position position="18"/>
    </location>
    <ligand>
        <name>a divalent metal cation</name>
        <dbReference type="ChEBI" id="CHEBI:60240"/>
        <label>3</label>
        <note>in cluster B</note>
    </ligand>
</feature>
<feature type="binding site" evidence="2">
    <location>
        <position position="20"/>
    </location>
    <ligand>
        <name>a divalent metal cation</name>
        <dbReference type="ChEBI" id="CHEBI:60240"/>
        <label>1</label>
        <note>in cluster B</note>
    </ligand>
</feature>
<feature type="binding site" evidence="2">
    <location>
        <position position="23"/>
    </location>
    <ligand>
        <name>a divalent metal cation</name>
        <dbReference type="ChEBI" id="CHEBI:60240"/>
        <label>1</label>
        <note>in cluster B</note>
    </ligand>
</feature>
<feature type="binding site" evidence="2">
    <location>
        <position position="23"/>
    </location>
    <ligand>
        <name>a divalent metal cation</name>
        <dbReference type="ChEBI" id="CHEBI:60240"/>
        <label>3</label>
        <note>in cluster B</note>
    </ligand>
</feature>
<feature type="binding site" evidence="2">
    <location>
        <position position="25"/>
    </location>
    <ligand>
        <name>a divalent metal cation</name>
        <dbReference type="ChEBI" id="CHEBI:60240"/>
        <label>2</label>
        <note>in cluster B</note>
    </ligand>
</feature>
<feature type="binding site" evidence="2">
    <location>
        <position position="28"/>
    </location>
    <ligand>
        <name>a divalent metal cation</name>
        <dbReference type="ChEBI" id="CHEBI:60240"/>
        <label>3</label>
        <note>in cluster B</note>
    </ligand>
</feature>
<feature type="binding site" evidence="2">
    <location>
        <position position="33"/>
    </location>
    <ligand>
        <name>a divalent metal cation</name>
        <dbReference type="ChEBI" id="CHEBI:60240"/>
        <label>4</label>
        <note>in cluster A</note>
    </ligand>
</feature>
<feature type="binding site" evidence="2">
    <location>
        <position position="34"/>
    </location>
    <ligand>
        <name>a divalent metal cation</name>
        <dbReference type="ChEBI" id="CHEBI:60240"/>
        <label>4</label>
        <note>in cluster A</note>
    </ligand>
</feature>
<feature type="binding site" evidence="2">
    <location>
        <position position="34"/>
    </location>
    <ligand>
        <name>a divalent metal cation</name>
        <dbReference type="ChEBI" id="CHEBI:60240"/>
        <label>5</label>
        <note>in cluster A</note>
    </ligand>
</feature>
<feature type="binding site" evidence="2">
    <location>
        <position position="36"/>
    </location>
    <ligand>
        <name>a divalent metal cation</name>
        <dbReference type="ChEBI" id="CHEBI:60240"/>
        <label>5</label>
        <note>in cluster A</note>
    </ligand>
</feature>
<feature type="binding site" evidence="2">
    <location>
        <position position="37"/>
    </location>
    <ligand>
        <name>a divalent metal cation</name>
        <dbReference type="ChEBI" id="CHEBI:60240"/>
        <label>5</label>
        <note>in cluster A</note>
    </ligand>
</feature>
<feature type="binding site" evidence="2">
    <location>
        <position position="37"/>
    </location>
    <ligand>
        <name>a divalent metal cation</name>
        <dbReference type="ChEBI" id="CHEBI:60240"/>
        <label>6</label>
        <note>in cluster A</note>
    </ligand>
</feature>
<feature type="binding site" evidence="2">
    <location>
        <position position="41"/>
    </location>
    <ligand>
        <name>a divalent metal cation</name>
        <dbReference type="ChEBI" id="CHEBI:60240"/>
        <label>6</label>
        <note>in cluster A</note>
    </ligand>
</feature>
<feature type="binding site" evidence="2">
    <location>
        <position position="44"/>
    </location>
    <ligand>
        <name>a divalent metal cation</name>
        <dbReference type="ChEBI" id="CHEBI:60240"/>
        <label>4</label>
        <note>in cluster A</note>
    </ligand>
</feature>
<feature type="binding site" evidence="2">
    <location>
        <position position="44"/>
    </location>
    <ligand>
        <name>a divalent metal cation</name>
        <dbReference type="ChEBI" id="CHEBI:60240"/>
        <label>6</label>
        <note>in cluster A</note>
    </ligand>
</feature>
<feature type="binding site" evidence="2">
    <location>
        <position position="48"/>
    </location>
    <ligand>
        <name>a divalent metal cation</name>
        <dbReference type="ChEBI" id="CHEBI:60240"/>
        <label>4</label>
        <note>in cluster A</note>
    </ligand>
</feature>
<feature type="binding site" evidence="2">
    <location>
        <position position="50"/>
    </location>
    <ligand>
        <name>a divalent metal cation</name>
        <dbReference type="ChEBI" id="CHEBI:60240"/>
        <label>5</label>
        <note>in cluster A</note>
    </ligand>
</feature>
<feature type="binding site" evidence="2">
    <location>
        <position position="50"/>
    </location>
    <ligand>
        <name>a divalent metal cation</name>
        <dbReference type="ChEBI" id="CHEBI:60240"/>
        <label>7</label>
        <note>in cluster A</note>
    </ligand>
</feature>
<feature type="binding site" evidence="3">
    <location>
        <position position="55"/>
    </location>
    <ligand>
        <name>a divalent metal cation</name>
        <dbReference type="ChEBI" id="CHEBI:60240"/>
        <label>7</label>
        <note>in cluster A</note>
    </ligand>
</feature>
<feature type="binding site" evidence="2">
    <location>
        <position position="59"/>
    </location>
    <ligand>
        <name>a divalent metal cation</name>
        <dbReference type="ChEBI" id="CHEBI:60240"/>
        <label>7</label>
        <note>in cluster A</note>
    </ligand>
</feature>
<feature type="binding site" evidence="2">
    <location>
        <position position="60"/>
    </location>
    <ligand>
        <name>a divalent metal cation</name>
        <dbReference type="ChEBI" id="CHEBI:60240"/>
        <label>6</label>
        <note>in cluster A</note>
    </ligand>
</feature>
<feature type="binding site" evidence="2">
    <location>
        <position position="60"/>
    </location>
    <ligand>
        <name>a divalent metal cation</name>
        <dbReference type="ChEBI" id="CHEBI:60240"/>
        <label>7</label>
        <note>in cluster A</note>
    </ligand>
</feature>
<feature type="sequence conflict" description="In Ref. 3; AAP31403." evidence="4" ref="3">
    <original>C</original>
    <variation>S</variation>
    <location>
        <position position="14"/>
    </location>
</feature>
<proteinExistence type="inferred from homology"/>
<keyword id="KW-0479">Metal-binding</keyword>
<keyword id="KW-0480">Metal-thiolate cluster</keyword>
<accession>P68505</accession>
<accession>P09861</accession>
<accession>Q7ZZW5</accession>
<sequence>MDPCECSKTGSCNCGGSCKCSNCACTSCKKASCCDCCPSGCSKCASGCVCKGKTCDTSCCQ</sequence>
<reference key="1">
    <citation type="journal article" date="1998" name="Mar. Environ. Res.">
        <title>Metallothionein cDNA sequences and gene expression in arctic char (Salvelinus alpinus) following metal and PCB exposure.</title>
        <authorList>
            <person name="Gerpe M."/>
            <person name="Kling P."/>
            <person name="Olsson P.-E."/>
        </authorList>
    </citation>
    <scope>NUCLEOTIDE SEQUENCE</scope>
    <source>
        <tissue>Liver</tissue>
    </source>
</reference>
<reference key="2">
    <citation type="submission" date="1998-10" db="EMBL/GenBank/DDBJ databases">
        <title>Identical coding sequence of metallothionein-A in salmonid fishes inferred from cDNA sequence of arctic char (Salvelinus alpinus).</title>
        <authorList>
            <person name="Egg M."/>
            <person name="Sturmbauer C."/>
            <person name="Dallinger R."/>
        </authorList>
    </citation>
    <scope>NUCLEOTIDE SEQUENCE</scope>
    <source>
        <tissue>Liver</tissue>
    </source>
</reference>
<reference key="3">
    <citation type="submission" date="2003-04" db="EMBL/GenBank/DDBJ databases">
        <title>Discovering single nucleotide polymorphisms in the introns of fish genes.</title>
        <authorList>
            <person name="McGowan C."/>
            <person name="Davidson E.A."/>
            <person name="Davidson W.S."/>
        </authorList>
    </citation>
    <scope>NUCLEOTIDE SEQUENCE [GENOMIC DNA]</scope>
</reference>
<evidence type="ECO:0000250" key="1"/>
<evidence type="ECO:0000250" key="2">
    <source>
        <dbReference type="UniProtKB" id="P02795"/>
    </source>
</evidence>
<evidence type="ECO:0000250" key="3">
    <source>
        <dbReference type="UniProtKB" id="P62339"/>
    </source>
</evidence>
<evidence type="ECO:0000305" key="4"/>